<comment type="function">
    <text evidence="2">Involved in the initial and rate-limiting step of peroxisomal beta-oxidation of straight-chain saturated and unsaturated very-long-chain fatty acids. Catalyzes the desaturation of fatty acyl-CoAs such as palmitoyl-CoA (hexadecanoyl-CoA) to 2-trans-enoyl-CoAs ((2E)-enoyl-CoAs) such as (2E)-hexadecenoyl-CoA, and donates electrons directly to molecular oxygen (O(2)), thereby producing hydrogen peroxide (H(2)O(2)).</text>
</comment>
<comment type="catalytic activity">
    <reaction evidence="1">
        <text>a 2,3-saturated acyl-CoA + O2 = a (2E)-enoyl-CoA + H2O2</text>
        <dbReference type="Rhea" id="RHEA:38959"/>
        <dbReference type="ChEBI" id="CHEBI:15379"/>
        <dbReference type="ChEBI" id="CHEBI:16240"/>
        <dbReference type="ChEBI" id="CHEBI:58856"/>
        <dbReference type="ChEBI" id="CHEBI:65111"/>
        <dbReference type="EC" id="1.3.3.6"/>
    </reaction>
    <physiologicalReaction direction="left-to-right" evidence="1">
        <dbReference type="Rhea" id="RHEA:38960"/>
    </physiologicalReaction>
</comment>
<comment type="catalytic activity">
    <reaction evidence="2">
        <text>hexadecanoyl-CoA + O2 = (2E)-hexadecenoyl-CoA + H2O2</text>
        <dbReference type="Rhea" id="RHEA:40167"/>
        <dbReference type="ChEBI" id="CHEBI:15379"/>
        <dbReference type="ChEBI" id="CHEBI:16240"/>
        <dbReference type="ChEBI" id="CHEBI:57379"/>
        <dbReference type="ChEBI" id="CHEBI:61526"/>
    </reaction>
    <physiologicalReaction direction="left-to-right" evidence="2">
        <dbReference type="Rhea" id="RHEA:40168"/>
    </physiologicalReaction>
</comment>
<comment type="catalytic activity">
    <reaction evidence="2">
        <text>dodecanoyl-CoA + O2 = (2E)-dodecenoyl-CoA + H2O2</text>
        <dbReference type="Rhea" id="RHEA:40171"/>
        <dbReference type="ChEBI" id="CHEBI:15379"/>
        <dbReference type="ChEBI" id="CHEBI:16240"/>
        <dbReference type="ChEBI" id="CHEBI:57330"/>
        <dbReference type="ChEBI" id="CHEBI:57375"/>
    </reaction>
    <physiologicalReaction direction="left-to-right" evidence="2">
        <dbReference type="Rhea" id="RHEA:40172"/>
    </physiologicalReaction>
</comment>
<comment type="catalytic activity">
    <reaction evidence="2">
        <text>octanoyl-CoA + O2 = (2E)-octenoyl-CoA + H2O2</text>
        <dbReference type="Rhea" id="RHEA:40175"/>
        <dbReference type="ChEBI" id="CHEBI:15379"/>
        <dbReference type="ChEBI" id="CHEBI:16240"/>
        <dbReference type="ChEBI" id="CHEBI:57386"/>
        <dbReference type="ChEBI" id="CHEBI:62242"/>
    </reaction>
    <physiologicalReaction direction="left-to-right" evidence="2">
        <dbReference type="Rhea" id="RHEA:40176"/>
    </physiologicalReaction>
</comment>
<comment type="catalytic activity">
    <reaction evidence="2">
        <text>decanoyl-CoA + O2 = (2E)-decenoyl-CoA + H2O2</text>
        <dbReference type="Rhea" id="RHEA:40179"/>
        <dbReference type="ChEBI" id="CHEBI:15379"/>
        <dbReference type="ChEBI" id="CHEBI:16240"/>
        <dbReference type="ChEBI" id="CHEBI:61406"/>
        <dbReference type="ChEBI" id="CHEBI:61430"/>
    </reaction>
    <physiologicalReaction direction="left-to-right" evidence="2">
        <dbReference type="Rhea" id="RHEA:40180"/>
    </physiologicalReaction>
</comment>
<comment type="catalytic activity">
    <reaction evidence="2">
        <text>tetradecanoyl-CoA + O2 = (2E)-tetradecenoyl-CoA + H2O2</text>
        <dbReference type="Rhea" id="RHEA:40183"/>
        <dbReference type="ChEBI" id="CHEBI:15379"/>
        <dbReference type="ChEBI" id="CHEBI:16240"/>
        <dbReference type="ChEBI" id="CHEBI:57385"/>
        <dbReference type="ChEBI" id="CHEBI:61405"/>
    </reaction>
    <physiologicalReaction direction="left-to-right" evidence="2">
        <dbReference type="Rhea" id="RHEA:40184"/>
    </physiologicalReaction>
</comment>
<comment type="catalytic activity">
    <reaction evidence="2">
        <text>hexadecanedioyl-CoA + O2 = (2E)-hexadecenedioyl-CoA + H2O2</text>
        <dbReference type="Rhea" id="RHEA:40275"/>
        <dbReference type="ChEBI" id="CHEBI:15379"/>
        <dbReference type="ChEBI" id="CHEBI:16240"/>
        <dbReference type="ChEBI" id="CHEBI:77075"/>
        <dbReference type="ChEBI" id="CHEBI:77085"/>
    </reaction>
    <physiologicalReaction direction="left-to-right" evidence="2">
        <dbReference type="Rhea" id="RHEA:40276"/>
    </physiologicalReaction>
</comment>
<comment type="catalytic activity">
    <reaction evidence="1">
        <text>tetracosanoyl-CoA + O2 = (2E)-tetracosenoyl-CoA + H2O2</text>
        <dbReference type="Rhea" id="RHEA:40319"/>
        <dbReference type="ChEBI" id="CHEBI:15379"/>
        <dbReference type="ChEBI" id="CHEBI:16240"/>
        <dbReference type="ChEBI" id="CHEBI:65052"/>
        <dbReference type="ChEBI" id="CHEBI:74693"/>
    </reaction>
    <physiologicalReaction direction="left-to-right" evidence="1">
        <dbReference type="Rhea" id="RHEA:40320"/>
    </physiologicalReaction>
</comment>
<comment type="catalytic activity">
    <reaction evidence="1">
        <text>glutaryl-CoA + O2 = (2E)-glutaconyl-CoA + H2O2</text>
        <dbReference type="Rhea" id="RHEA:40315"/>
        <dbReference type="ChEBI" id="CHEBI:15379"/>
        <dbReference type="ChEBI" id="CHEBI:16240"/>
        <dbReference type="ChEBI" id="CHEBI:57353"/>
        <dbReference type="ChEBI" id="CHEBI:57378"/>
    </reaction>
    <physiologicalReaction direction="left-to-right" evidence="1">
        <dbReference type="Rhea" id="RHEA:40316"/>
    </physiologicalReaction>
</comment>
<comment type="catalytic activity">
    <reaction evidence="1">
        <text>hexanoyl-CoA + O2 = (2E)-hexenoyl-CoA + H2O2</text>
        <dbReference type="Rhea" id="RHEA:40311"/>
        <dbReference type="ChEBI" id="CHEBI:15379"/>
        <dbReference type="ChEBI" id="CHEBI:16240"/>
        <dbReference type="ChEBI" id="CHEBI:62077"/>
        <dbReference type="ChEBI" id="CHEBI:62620"/>
    </reaction>
    <physiologicalReaction direction="left-to-right" evidence="1">
        <dbReference type="Rhea" id="RHEA:40312"/>
    </physiologicalReaction>
</comment>
<comment type="catalytic activity">
    <reaction evidence="1">
        <text>octadecanoyl-CoA + O2 = (2E)-octadecenoyl-CoA + H2O2</text>
        <dbReference type="Rhea" id="RHEA:38971"/>
        <dbReference type="ChEBI" id="CHEBI:15379"/>
        <dbReference type="ChEBI" id="CHEBI:16240"/>
        <dbReference type="ChEBI" id="CHEBI:57394"/>
        <dbReference type="ChEBI" id="CHEBI:71412"/>
    </reaction>
    <physiologicalReaction direction="left-to-right" evidence="1">
        <dbReference type="Rhea" id="RHEA:38972"/>
    </physiologicalReaction>
</comment>
<comment type="catalytic activity">
    <reaction evidence="2">
        <text>(5Z,8Z,11Z,14Z,17Z)-eicosapentaenoyl-CoA + O2 = (2E,5Z,8Z,11Z,14Z,17Z)-icosahexaenoyl-CoA + H2O2</text>
        <dbReference type="Rhea" id="RHEA:69643"/>
        <dbReference type="ChEBI" id="CHEBI:15379"/>
        <dbReference type="ChEBI" id="CHEBI:16240"/>
        <dbReference type="ChEBI" id="CHEBI:73862"/>
        <dbReference type="ChEBI" id="CHEBI:187901"/>
    </reaction>
    <physiologicalReaction direction="left-to-right" evidence="2">
        <dbReference type="Rhea" id="RHEA:69644"/>
    </physiologicalReaction>
</comment>
<comment type="catalytic activity">
    <reaction evidence="3">
        <text>(6Z,9Z,12Z,15Z,18Z,21Z)-tetracosahexaenoyl-CoA + O2 = (2E,6Z,9Z,12Z,15Z,18Z,21Z)-tetracosaheptaenoyl-CoA + H2O2</text>
        <dbReference type="Rhea" id="RHEA:39119"/>
        <dbReference type="ChEBI" id="CHEBI:15379"/>
        <dbReference type="ChEBI" id="CHEBI:16240"/>
        <dbReference type="ChEBI" id="CHEBI:74086"/>
        <dbReference type="ChEBI" id="CHEBI:76360"/>
    </reaction>
    <physiologicalReaction direction="left-to-right" evidence="3">
        <dbReference type="Rhea" id="RHEA:39120"/>
    </physiologicalReaction>
</comment>
<comment type="cofactor">
    <cofactor evidence="1">
        <name>FAD</name>
        <dbReference type="ChEBI" id="CHEBI:57692"/>
    </cofactor>
</comment>
<comment type="pathway">
    <text>Lipid metabolism; peroxisomal fatty acid beta-oxidation.</text>
</comment>
<comment type="subunit">
    <text evidence="1 2">Homodimer (By similarity). Interacts with LONP2 (By similarity).</text>
</comment>
<comment type="subcellular location">
    <subcellularLocation>
        <location evidence="1">Peroxisome</location>
    </subcellularLocation>
</comment>
<comment type="similarity">
    <text evidence="5">Belongs to the acyl-CoA oxidase family.</text>
</comment>
<sequence length="660" mass="74379">MNPDLQKERAGASFNPELLTNVLDGSPENTRRRREIENLILNDPDFQHENLNFLSRSQRYEVAVKKSAIMVQKMRKFGIADPAEIMWFKKLHLVNFVEPVGLNYSMFIPTLLNQGTTAQQEKWLHSSKGLEIIGTYAQTEMGHGTHLRGLETTATYDPETQEFILNSPTVTSIKWWPGGLGKTSNHAIVLAQLFTQGKCYGLHAFIVPIRELGTHKPLPGITVGDIGPKFGYDEMDNGYLKMDNYRIPRENMLMKHAQVKPDGTYVKPLNNKLTYGTMVFIRSFLVGESARSLSKACTIAVRYSAVRHQSEINPGEPEPQILDYQTQQYKLFPLLATAYAFQFVGAYMKETYLRINEDIGHGDLSELPELHALTAGLKAFTSWTTNTAIEACRMACGGHGYSHCSGLPNIYVTFTPTCTFEGENTVMMLQTARFLMKSYDQVHSGKLVCGMVSYLNDLPSQRIQPQQVAVWPTMVDINSPDSLTEAYKLRAARLVEIAAKNLQTEVIHRKSKEVAWNLTSIDLVRASEAHCHYVVVKLFTEKVLQIQEKSIQAVLRRLCLLYSLYGISQNAGDFLQGSIMTESQITQVNGRIKELLTAIRPDAVALVDAFDFQDVTLGSVLGRYDGNVYENLFEWAKKSPLNKTEVHESYKHLKSLQSKL</sequence>
<dbReference type="EC" id="1.3.3.6" evidence="1"/>
<dbReference type="EMBL" id="BC102761">
    <property type="protein sequence ID" value="AAI02762.1"/>
    <property type="molecule type" value="mRNA"/>
</dbReference>
<dbReference type="RefSeq" id="NP_001030366.1">
    <property type="nucleotide sequence ID" value="NM_001035289.3"/>
</dbReference>
<dbReference type="SMR" id="Q3SZP5"/>
<dbReference type="FunCoup" id="Q3SZP5">
    <property type="interactions" value="2103"/>
</dbReference>
<dbReference type="STRING" id="9913.ENSBTAP00000070369"/>
<dbReference type="PaxDb" id="9913-ENSBTAP00000029362"/>
<dbReference type="PeptideAtlas" id="Q3SZP5"/>
<dbReference type="GeneID" id="513996"/>
<dbReference type="KEGG" id="bta:513996"/>
<dbReference type="CTD" id="51"/>
<dbReference type="VEuPathDB" id="HostDB:ENSBTAG00000030174"/>
<dbReference type="eggNOG" id="KOG0136">
    <property type="taxonomic scope" value="Eukaryota"/>
</dbReference>
<dbReference type="InParanoid" id="Q3SZP5"/>
<dbReference type="OMA" id="AHAQYMV"/>
<dbReference type="OrthoDB" id="538336at2759"/>
<dbReference type="Reactome" id="R-BTA-2046106">
    <property type="pathway name" value="alpha-linolenic acid (ALA) metabolism"/>
</dbReference>
<dbReference type="Reactome" id="R-BTA-390247">
    <property type="pathway name" value="Beta-oxidation of very long chain fatty acids"/>
</dbReference>
<dbReference type="Reactome" id="R-BTA-9033241">
    <property type="pathway name" value="Peroxisomal protein import"/>
</dbReference>
<dbReference type="UniPathway" id="UPA00661"/>
<dbReference type="Proteomes" id="UP000009136">
    <property type="component" value="Chromosome 19"/>
</dbReference>
<dbReference type="Bgee" id="ENSBTAG00000030174">
    <property type="expression patterns" value="Expressed in adult mammalian kidney and 111 other cell types or tissues"/>
</dbReference>
<dbReference type="GO" id="GO:0005777">
    <property type="term" value="C:peroxisome"/>
    <property type="evidence" value="ECO:0000250"/>
    <property type="project" value="UniProtKB"/>
</dbReference>
<dbReference type="GO" id="GO:0003997">
    <property type="term" value="F:acyl-CoA oxidase activity"/>
    <property type="evidence" value="ECO:0000250"/>
    <property type="project" value="UniProtKB"/>
</dbReference>
<dbReference type="GO" id="GO:0071949">
    <property type="term" value="F:FAD binding"/>
    <property type="evidence" value="ECO:0007669"/>
    <property type="project" value="InterPro"/>
</dbReference>
<dbReference type="GO" id="GO:0005504">
    <property type="term" value="F:fatty acid binding"/>
    <property type="evidence" value="ECO:0000318"/>
    <property type="project" value="GO_Central"/>
</dbReference>
<dbReference type="GO" id="GO:0050660">
    <property type="term" value="F:flavin adenine dinucleotide binding"/>
    <property type="evidence" value="ECO:0000318"/>
    <property type="project" value="GO_Central"/>
</dbReference>
<dbReference type="GO" id="GO:0016401">
    <property type="term" value="F:palmitoyl-CoA oxidase activity"/>
    <property type="evidence" value="ECO:0000318"/>
    <property type="project" value="GO_Central"/>
</dbReference>
<dbReference type="GO" id="GO:0042803">
    <property type="term" value="F:protein homodimerization activity"/>
    <property type="evidence" value="ECO:0000250"/>
    <property type="project" value="UniProtKB"/>
</dbReference>
<dbReference type="GO" id="GO:0033540">
    <property type="term" value="P:fatty acid beta-oxidation using acyl-CoA oxidase"/>
    <property type="evidence" value="ECO:0000318"/>
    <property type="project" value="GO_Central"/>
</dbReference>
<dbReference type="GO" id="GO:0009062">
    <property type="term" value="P:fatty acid catabolic process"/>
    <property type="evidence" value="ECO:0000250"/>
    <property type="project" value="UniProtKB"/>
</dbReference>
<dbReference type="GO" id="GO:0019395">
    <property type="term" value="P:fatty acid oxidation"/>
    <property type="evidence" value="ECO:0000250"/>
    <property type="project" value="UniProtKB"/>
</dbReference>
<dbReference type="GO" id="GO:0006091">
    <property type="term" value="P:generation of precursor metabolites and energy"/>
    <property type="evidence" value="ECO:0000250"/>
    <property type="project" value="UniProtKB"/>
</dbReference>
<dbReference type="GO" id="GO:0050665">
    <property type="term" value="P:hydrogen peroxide biosynthetic process"/>
    <property type="evidence" value="ECO:0000250"/>
    <property type="project" value="UniProtKB"/>
</dbReference>
<dbReference type="GO" id="GO:0006629">
    <property type="term" value="P:lipid metabolic process"/>
    <property type="evidence" value="ECO:0000250"/>
    <property type="project" value="UniProtKB"/>
</dbReference>
<dbReference type="GO" id="GO:0006693">
    <property type="term" value="P:prostaglandin metabolic process"/>
    <property type="evidence" value="ECO:0000250"/>
    <property type="project" value="UniProtKB"/>
</dbReference>
<dbReference type="GO" id="GO:0140493">
    <property type="term" value="P:very long-chain fatty acid beta-oxidation"/>
    <property type="evidence" value="ECO:0000250"/>
    <property type="project" value="UniProtKB"/>
</dbReference>
<dbReference type="GO" id="GO:0000038">
    <property type="term" value="P:very long-chain fatty acid metabolic process"/>
    <property type="evidence" value="ECO:0000318"/>
    <property type="project" value="GO_Central"/>
</dbReference>
<dbReference type="CDD" id="cd01150">
    <property type="entry name" value="AXO"/>
    <property type="match status" value="1"/>
</dbReference>
<dbReference type="FunFam" id="1.10.540.10:FF:000006">
    <property type="entry name" value="Acyl-coenzyme A oxidase"/>
    <property type="match status" value="1"/>
</dbReference>
<dbReference type="FunFam" id="1.20.140.10:FF:000005">
    <property type="entry name" value="Acyl-coenzyme A oxidase"/>
    <property type="match status" value="1"/>
</dbReference>
<dbReference type="FunFam" id="1.20.140.10:FF:000007">
    <property type="entry name" value="Acyl-coenzyme A oxidase"/>
    <property type="match status" value="1"/>
</dbReference>
<dbReference type="FunFam" id="2.40.110.10:FF:000003">
    <property type="entry name" value="Acyl-coenzyme A oxidase"/>
    <property type="match status" value="1"/>
</dbReference>
<dbReference type="Gene3D" id="1.10.540.10">
    <property type="entry name" value="Acyl-CoA dehydrogenase/oxidase, N-terminal domain"/>
    <property type="match status" value="1"/>
</dbReference>
<dbReference type="Gene3D" id="2.40.110.10">
    <property type="entry name" value="Butyryl-CoA Dehydrogenase, subunit A, domain 2"/>
    <property type="match status" value="1"/>
</dbReference>
<dbReference type="Gene3D" id="1.20.140.10">
    <property type="entry name" value="Butyryl-CoA Dehydrogenase, subunit A, domain 3"/>
    <property type="match status" value="2"/>
</dbReference>
<dbReference type="InterPro" id="IPR034171">
    <property type="entry name" value="ACO"/>
</dbReference>
<dbReference type="InterPro" id="IPR055060">
    <property type="entry name" value="ACOX_C_alpha1"/>
</dbReference>
<dbReference type="InterPro" id="IPR029320">
    <property type="entry name" value="Acyl-CoA_ox_N"/>
</dbReference>
<dbReference type="InterPro" id="IPR006091">
    <property type="entry name" value="Acyl-CoA_Oxase/DH_mid-dom"/>
</dbReference>
<dbReference type="InterPro" id="IPR046373">
    <property type="entry name" value="Acyl-CoA_Oxase/DH_mid-dom_sf"/>
</dbReference>
<dbReference type="InterPro" id="IPR012258">
    <property type="entry name" value="Acyl-CoA_oxidase"/>
</dbReference>
<dbReference type="InterPro" id="IPR002655">
    <property type="entry name" value="Acyl-CoA_oxidase_C"/>
</dbReference>
<dbReference type="InterPro" id="IPR036250">
    <property type="entry name" value="AcylCo_DH-like_C"/>
</dbReference>
<dbReference type="InterPro" id="IPR037069">
    <property type="entry name" value="AcylCoA_DH/ox_N_sf"/>
</dbReference>
<dbReference type="InterPro" id="IPR009100">
    <property type="entry name" value="AcylCoA_DH/oxidase_NM_dom_sf"/>
</dbReference>
<dbReference type="PANTHER" id="PTHR10909">
    <property type="entry name" value="ELECTRON TRANSPORT OXIDOREDUCTASE"/>
    <property type="match status" value="1"/>
</dbReference>
<dbReference type="PANTHER" id="PTHR10909:SF250">
    <property type="entry name" value="PEROXISOMAL ACYL-COENZYME A OXIDASE 1"/>
    <property type="match status" value="1"/>
</dbReference>
<dbReference type="Pfam" id="PF01756">
    <property type="entry name" value="ACOX"/>
    <property type="match status" value="1"/>
</dbReference>
<dbReference type="Pfam" id="PF22924">
    <property type="entry name" value="ACOX_C_alpha1"/>
    <property type="match status" value="1"/>
</dbReference>
<dbReference type="Pfam" id="PF02770">
    <property type="entry name" value="Acyl-CoA_dh_M"/>
    <property type="match status" value="1"/>
</dbReference>
<dbReference type="Pfam" id="PF14749">
    <property type="entry name" value="Acyl-CoA_ox_N"/>
    <property type="match status" value="1"/>
</dbReference>
<dbReference type="PIRSF" id="PIRSF000168">
    <property type="entry name" value="Acyl-CoA_oxidase"/>
    <property type="match status" value="1"/>
</dbReference>
<dbReference type="SUPFAM" id="SSF47203">
    <property type="entry name" value="Acyl-CoA dehydrogenase C-terminal domain-like"/>
    <property type="match status" value="2"/>
</dbReference>
<dbReference type="SUPFAM" id="SSF56645">
    <property type="entry name" value="Acyl-CoA dehydrogenase NM domain-like"/>
    <property type="match status" value="1"/>
</dbReference>
<proteinExistence type="evidence at transcript level"/>
<evidence type="ECO:0000250" key="1">
    <source>
        <dbReference type="UniProtKB" id="P07872"/>
    </source>
</evidence>
<evidence type="ECO:0000250" key="2">
    <source>
        <dbReference type="UniProtKB" id="Q15067"/>
    </source>
</evidence>
<evidence type="ECO:0000250" key="3">
    <source>
        <dbReference type="UniProtKB" id="Q9R0H0"/>
    </source>
</evidence>
<evidence type="ECO:0000255" key="4"/>
<evidence type="ECO:0000305" key="5"/>
<organism>
    <name type="scientific">Bos taurus</name>
    <name type="common">Bovine</name>
    <dbReference type="NCBI Taxonomy" id="9913"/>
    <lineage>
        <taxon>Eukaryota</taxon>
        <taxon>Metazoa</taxon>
        <taxon>Chordata</taxon>
        <taxon>Craniata</taxon>
        <taxon>Vertebrata</taxon>
        <taxon>Euteleostomi</taxon>
        <taxon>Mammalia</taxon>
        <taxon>Eutheria</taxon>
        <taxon>Laurasiatheria</taxon>
        <taxon>Artiodactyla</taxon>
        <taxon>Ruminantia</taxon>
        <taxon>Pecora</taxon>
        <taxon>Bovidae</taxon>
        <taxon>Bovinae</taxon>
        <taxon>Bos</taxon>
    </lineage>
</organism>
<reference key="1">
    <citation type="submission" date="2005-08" db="EMBL/GenBank/DDBJ databases">
        <authorList>
            <consortium name="NIH - Mammalian Gene Collection (MGC) project"/>
        </authorList>
    </citation>
    <scope>NUCLEOTIDE SEQUENCE [LARGE SCALE MRNA]</scope>
    <source>
        <strain>Crossbred X Angus</strain>
        <tissue>Ileum</tissue>
    </source>
</reference>
<protein>
    <recommendedName>
        <fullName evidence="2">Peroxisomal acyl-coenzyme A oxidase 1</fullName>
        <shortName evidence="2">AOX</shortName>
        <ecNumber evidence="1">1.3.3.6</ecNumber>
    </recommendedName>
    <alternativeName>
        <fullName evidence="2">Palmitoyl-CoA oxidase</fullName>
    </alternativeName>
    <alternativeName>
        <fullName>Peroxisomal fatty acyl-CoA oxidase</fullName>
    </alternativeName>
    <alternativeName>
        <fullName>Straight-chain acyl-CoA oxidase</fullName>
    </alternativeName>
    <component>
        <recommendedName>
            <fullName evidence="1">Peroxisomal acyl-CoA oxidase 1, A chain</fullName>
        </recommendedName>
    </component>
    <component>
        <recommendedName>
            <fullName evidence="1">Peroxisomal acyl-CoA oxidase 1, B chain</fullName>
        </recommendedName>
    </component>
    <component>
        <recommendedName>
            <fullName evidence="1">Peroxisomal acyl-CoA oxidase 1, C chain</fullName>
        </recommendedName>
    </component>
</protein>
<feature type="chain" id="PRO_0000281996" description="Peroxisomal acyl-CoA oxidase 1, A chain">
    <location>
        <begin position="1"/>
        <end position="660"/>
    </location>
</feature>
<feature type="chain" id="PRO_0000447496" description="Peroxisomal acyl-CoA oxidase 1, B chain" evidence="1">
    <location>
        <begin position="1"/>
        <end position="438"/>
    </location>
</feature>
<feature type="chain" id="PRO_0000447497" description="Peroxisomal acyl-CoA oxidase 1, C chain" evidence="1">
    <location>
        <begin position="439"/>
        <end position="660"/>
    </location>
</feature>
<feature type="short sequence motif" description="Microbody targeting signal" evidence="4">
    <location>
        <begin position="658"/>
        <end position="660"/>
    </location>
</feature>
<feature type="active site" description="Proton acceptor" evidence="1">
    <location>
        <position position="421"/>
    </location>
</feature>
<feature type="binding site" evidence="1">
    <location>
        <position position="139"/>
    </location>
    <ligand>
        <name>FAD</name>
        <dbReference type="ChEBI" id="CHEBI:57692"/>
    </ligand>
</feature>
<feature type="binding site" evidence="1">
    <location>
        <position position="178"/>
    </location>
    <ligand>
        <name>FAD</name>
        <dbReference type="ChEBI" id="CHEBI:57692"/>
    </ligand>
</feature>
<feature type="site" description="Cleavage" evidence="1">
    <location>
        <begin position="468"/>
        <end position="469"/>
    </location>
</feature>
<feature type="modified residue" description="Phosphoserine" evidence="2">
    <location>
        <position position="26"/>
    </location>
</feature>
<feature type="modified residue" description="N6-acetyllysine" evidence="3">
    <location>
        <position position="65"/>
    </location>
</feature>
<feature type="modified residue" description="N6-succinyllysine" evidence="3">
    <location>
        <position position="89"/>
    </location>
</feature>
<feature type="modified residue" description="N6-succinyllysine" evidence="3">
    <location>
        <position position="90"/>
    </location>
</feature>
<feature type="modified residue" description="N6-acetyllysine" evidence="3">
    <location>
        <position position="216"/>
    </location>
</feature>
<feature type="modified residue" description="N6-succinyllysine" evidence="3">
    <location>
        <position position="241"/>
    </location>
</feature>
<feature type="modified residue" description="N6-acetyllysine" evidence="2">
    <location>
        <position position="255"/>
    </location>
</feature>
<feature type="modified residue" description="N6-acetyllysine" evidence="2">
    <location>
        <position position="267"/>
    </location>
</feature>
<feature type="modified residue" description="N6-acetyllysine" evidence="3">
    <location>
        <position position="272"/>
    </location>
</feature>
<feature type="modified residue" description="N6-succinyllysine" evidence="3">
    <location>
        <position position="349"/>
    </location>
</feature>
<feature type="modified residue" description="N6-acetyllysine; alternate" evidence="2">
    <location>
        <position position="437"/>
    </location>
</feature>
<feature type="modified residue" description="N6-succinyllysine; alternate" evidence="3">
    <location>
        <position position="437"/>
    </location>
</feature>
<feature type="modified residue" description="N6-acetyllysine; alternate" evidence="3">
    <location>
        <position position="446"/>
    </location>
</feature>
<feature type="modified residue" description="N6-succinyllysine; alternate" evidence="3">
    <location>
        <position position="446"/>
    </location>
</feature>
<feature type="modified residue" description="N6-acetyllysine" evidence="2">
    <location>
        <position position="500"/>
    </location>
</feature>
<feature type="modified residue" description="N6-acetyllysine; alternate" evidence="3">
    <location>
        <position position="512"/>
    </location>
</feature>
<feature type="modified residue" description="N6-succinyllysine; alternate" evidence="3">
    <location>
        <position position="512"/>
    </location>
</feature>
<feature type="modified residue" description="N6-succinyllysine" evidence="3">
    <location>
        <position position="542"/>
    </location>
</feature>
<feature type="modified residue" description="N6-acetyllysine; alternate" evidence="3">
    <location>
        <position position="637"/>
    </location>
</feature>
<feature type="modified residue" description="N6-succinyllysine; alternate" evidence="3">
    <location>
        <position position="637"/>
    </location>
</feature>
<feature type="modified residue" description="N6-succinyllysine" evidence="3">
    <location>
        <position position="643"/>
    </location>
</feature>
<feature type="modified residue" description="Phosphoserine" evidence="3">
    <location>
        <position position="649"/>
    </location>
</feature>
<feature type="modified residue" description="N6-acetyllysine" evidence="3">
    <location>
        <position position="651"/>
    </location>
</feature>
<feature type="modified residue" description="N6-succinyllysine" evidence="3">
    <location>
        <position position="654"/>
    </location>
</feature>
<keyword id="KW-0007">Acetylation</keyword>
<keyword id="KW-0274">FAD</keyword>
<keyword id="KW-0276">Fatty acid metabolism</keyword>
<keyword id="KW-0285">Flavoprotein</keyword>
<keyword id="KW-0443">Lipid metabolism</keyword>
<keyword id="KW-0560">Oxidoreductase</keyword>
<keyword id="KW-0576">Peroxisome</keyword>
<keyword id="KW-0597">Phosphoprotein</keyword>
<keyword id="KW-1185">Reference proteome</keyword>
<accession>Q3SZP5</accession>
<gene>
    <name evidence="2" type="primary">ACOX1</name>
</gene>
<name>ACOX1_BOVIN</name>